<accession>Q250M5</accession>
<comment type="function">
    <text evidence="1">Binds 23S rRNA and is also seen to make contacts with the A and possibly P site tRNAs.</text>
</comment>
<comment type="subunit">
    <text evidence="1">Part of the 50S ribosomal subunit.</text>
</comment>
<comment type="similarity">
    <text evidence="1">Belongs to the universal ribosomal protein uL16 family.</text>
</comment>
<sequence>MLVPTRVKHRKQHRGRMHGKATRGNTITFGEYGLVALEPAWITNRQIEAARIAMTRYIKRGGKVWIKIFPDKPITAKPAETRMGSGKGSPEYWVAVVKPGRVMFELAGVPEEIAKEALRLAMHKLPVKCKIVRREELEGGDANEN</sequence>
<dbReference type="EMBL" id="AP008230">
    <property type="protein sequence ID" value="BAE82267.1"/>
    <property type="molecule type" value="Genomic_DNA"/>
</dbReference>
<dbReference type="RefSeq" id="WP_005810150.1">
    <property type="nucleotide sequence ID" value="NC_007907.1"/>
</dbReference>
<dbReference type="SMR" id="Q250M5"/>
<dbReference type="STRING" id="138119.DSY0478"/>
<dbReference type="KEGG" id="dsy:DSY0478"/>
<dbReference type="eggNOG" id="COG0197">
    <property type="taxonomic scope" value="Bacteria"/>
</dbReference>
<dbReference type="HOGENOM" id="CLU_078858_2_1_9"/>
<dbReference type="Proteomes" id="UP000001946">
    <property type="component" value="Chromosome"/>
</dbReference>
<dbReference type="GO" id="GO:0022625">
    <property type="term" value="C:cytosolic large ribosomal subunit"/>
    <property type="evidence" value="ECO:0007669"/>
    <property type="project" value="TreeGrafter"/>
</dbReference>
<dbReference type="GO" id="GO:0019843">
    <property type="term" value="F:rRNA binding"/>
    <property type="evidence" value="ECO:0007669"/>
    <property type="project" value="UniProtKB-UniRule"/>
</dbReference>
<dbReference type="GO" id="GO:0003735">
    <property type="term" value="F:structural constituent of ribosome"/>
    <property type="evidence" value="ECO:0007669"/>
    <property type="project" value="InterPro"/>
</dbReference>
<dbReference type="GO" id="GO:0000049">
    <property type="term" value="F:tRNA binding"/>
    <property type="evidence" value="ECO:0007669"/>
    <property type="project" value="UniProtKB-KW"/>
</dbReference>
<dbReference type="GO" id="GO:0006412">
    <property type="term" value="P:translation"/>
    <property type="evidence" value="ECO:0007669"/>
    <property type="project" value="UniProtKB-UniRule"/>
</dbReference>
<dbReference type="CDD" id="cd01433">
    <property type="entry name" value="Ribosomal_L16_L10e"/>
    <property type="match status" value="1"/>
</dbReference>
<dbReference type="FunFam" id="3.90.1170.10:FF:000001">
    <property type="entry name" value="50S ribosomal protein L16"/>
    <property type="match status" value="1"/>
</dbReference>
<dbReference type="Gene3D" id="3.90.1170.10">
    <property type="entry name" value="Ribosomal protein L10e/L16"/>
    <property type="match status" value="1"/>
</dbReference>
<dbReference type="HAMAP" id="MF_01342">
    <property type="entry name" value="Ribosomal_uL16"/>
    <property type="match status" value="1"/>
</dbReference>
<dbReference type="InterPro" id="IPR047873">
    <property type="entry name" value="Ribosomal_uL16"/>
</dbReference>
<dbReference type="InterPro" id="IPR000114">
    <property type="entry name" value="Ribosomal_uL16_bact-type"/>
</dbReference>
<dbReference type="InterPro" id="IPR020798">
    <property type="entry name" value="Ribosomal_uL16_CS"/>
</dbReference>
<dbReference type="InterPro" id="IPR016180">
    <property type="entry name" value="Ribosomal_uL16_dom"/>
</dbReference>
<dbReference type="InterPro" id="IPR036920">
    <property type="entry name" value="Ribosomal_uL16_sf"/>
</dbReference>
<dbReference type="NCBIfam" id="TIGR01164">
    <property type="entry name" value="rplP_bact"/>
    <property type="match status" value="1"/>
</dbReference>
<dbReference type="PANTHER" id="PTHR12220">
    <property type="entry name" value="50S/60S RIBOSOMAL PROTEIN L16"/>
    <property type="match status" value="1"/>
</dbReference>
<dbReference type="PANTHER" id="PTHR12220:SF13">
    <property type="entry name" value="LARGE RIBOSOMAL SUBUNIT PROTEIN UL16M"/>
    <property type="match status" value="1"/>
</dbReference>
<dbReference type="Pfam" id="PF00252">
    <property type="entry name" value="Ribosomal_L16"/>
    <property type="match status" value="1"/>
</dbReference>
<dbReference type="PRINTS" id="PR00060">
    <property type="entry name" value="RIBOSOMALL16"/>
</dbReference>
<dbReference type="SUPFAM" id="SSF54686">
    <property type="entry name" value="Ribosomal protein L16p/L10e"/>
    <property type="match status" value="1"/>
</dbReference>
<dbReference type="PROSITE" id="PS00586">
    <property type="entry name" value="RIBOSOMAL_L16_1"/>
    <property type="match status" value="1"/>
</dbReference>
<dbReference type="PROSITE" id="PS00701">
    <property type="entry name" value="RIBOSOMAL_L16_2"/>
    <property type="match status" value="1"/>
</dbReference>
<evidence type="ECO:0000255" key="1">
    <source>
        <dbReference type="HAMAP-Rule" id="MF_01342"/>
    </source>
</evidence>
<evidence type="ECO:0000256" key="2">
    <source>
        <dbReference type="SAM" id="MobiDB-lite"/>
    </source>
</evidence>
<evidence type="ECO:0000305" key="3"/>
<keyword id="KW-1185">Reference proteome</keyword>
<keyword id="KW-0687">Ribonucleoprotein</keyword>
<keyword id="KW-0689">Ribosomal protein</keyword>
<keyword id="KW-0694">RNA-binding</keyword>
<keyword id="KW-0699">rRNA-binding</keyword>
<keyword id="KW-0820">tRNA-binding</keyword>
<name>RL16_DESHY</name>
<proteinExistence type="inferred from homology"/>
<organism>
    <name type="scientific">Desulfitobacterium hafniense (strain Y51)</name>
    <dbReference type="NCBI Taxonomy" id="138119"/>
    <lineage>
        <taxon>Bacteria</taxon>
        <taxon>Bacillati</taxon>
        <taxon>Bacillota</taxon>
        <taxon>Clostridia</taxon>
        <taxon>Eubacteriales</taxon>
        <taxon>Desulfitobacteriaceae</taxon>
        <taxon>Desulfitobacterium</taxon>
    </lineage>
</organism>
<feature type="chain" id="PRO_0000251630" description="Large ribosomal subunit protein uL16">
    <location>
        <begin position="1"/>
        <end position="145"/>
    </location>
</feature>
<feature type="region of interest" description="Disordered" evidence="2">
    <location>
        <begin position="1"/>
        <end position="22"/>
    </location>
</feature>
<feature type="compositionally biased region" description="Basic residues" evidence="2">
    <location>
        <begin position="1"/>
        <end position="21"/>
    </location>
</feature>
<reference key="1">
    <citation type="journal article" date="2006" name="J. Bacteriol.">
        <title>Complete genome sequence of the dehalorespiring bacterium Desulfitobacterium hafniense Y51 and comparison with Dehalococcoides ethenogenes 195.</title>
        <authorList>
            <person name="Nonaka H."/>
            <person name="Keresztes G."/>
            <person name="Shinoda Y."/>
            <person name="Ikenaga Y."/>
            <person name="Abe M."/>
            <person name="Naito K."/>
            <person name="Inatomi K."/>
            <person name="Furukawa K."/>
            <person name="Inui M."/>
            <person name="Yukawa H."/>
        </authorList>
    </citation>
    <scope>NUCLEOTIDE SEQUENCE [LARGE SCALE GENOMIC DNA]</scope>
    <source>
        <strain>Y51</strain>
    </source>
</reference>
<gene>
    <name evidence="1" type="primary">rplP</name>
    <name type="ordered locus">DSY0478</name>
</gene>
<protein>
    <recommendedName>
        <fullName evidence="1">Large ribosomal subunit protein uL16</fullName>
    </recommendedName>
    <alternativeName>
        <fullName evidence="3">50S ribosomal protein L16</fullName>
    </alternativeName>
</protein>